<gene>
    <name evidence="1" type="primary">glmU</name>
    <name type="ordered locus">SAG1538</name>
</gene>
<comment type="function">
    <text evidence="1">Catalyzes the last two sequential reactions in the de novo biosynthetic pathway for UDP-N-acetylglucosamine (UDP-GlcNAc). The C-terminal domain catalyzes the transfer of acetyl group from acetyl coenzyme A to glucosamine-1-phosphate (GlcN-1-P) to produce N-acetylglucosamine-1-phosphate (GlcNAc-1-P), which is converted into UDP-GlcNAc by the transfer of uridine 5-monophosphate (from uridine 5-triphosphate), a reaction catalyzed by the N-terminal domain.</text>
</comment>
<comment type="catalytic activity">
    <reaction evidence="1">
        <text>alpha-D-glucosamine 1-phosphate + acetyl-CoA = N-acetyl-alpha-D-glucosamine 1-phosphate + CoA + H(+)</text>
        <dbReference type="Rhea" id="RHEA:13725"/>
        <dbReference type="ChEBI" id="CHEBI:15378"/>
        <dbReference type="ChEBI" id="CHEBI:57287"/>
        <dbReference type="ChEBI" id="CHEBI:57288"/>
        <dbReference type="ChEBI" id="CHEBI:57776"/>
        <dbReference type="ChEBI" id="CHEBI:58516"/>
        <dbReference type="EC" id="2.3.1.157"/>
    </reaction>
</comment>
<comment type="catalytic activity">
    <reaction evidence="1">
        <text>N-acetyl-alpha-D-glucosamine 1-phosphate + UTP + H(+) = UDP-N-acetyl-alpha-D-glucosamine + diphosphate</text>
        <dbReference type="Rhea" id="RHEA:13509"/>
        <dbReference type="ChEBI" id="CHEBI:15378"/>
        <dbReference type="ChEBI" id="CHEBI:33019"/>
        <dbReference type="ChEBI" id="CHEBI:46398"/>
        <dbReference type="ChEBI" id="CHEBI:57705"/>
        <dbReference type="ChEBI" id="CHEBI:57776"/>
        <dbReference type="EC" id="2.7.7.23"/>
    </reaction>
</comment>
<comment type="cofactor">
    <cofactor evidence="1">
        <name>Mg(2+)</name>
        <dbReference type="ChEBI" id="CHEBI:18420"/>
    </cofactor>
    <text evidence="1">Binds 1 Mg(2+) ion per subunit.</text>
</comment>
<comment type="pathway">
    <text evidence="1">Nucleotide-sugar biosynthesis; UDP-N-acetyl-alpha-D-glucosamine biosynthesis; N-acetyl-alpha-D-glucosamine 1-phosphate from alpha-D-glucosamine 6-phosphate (route II): step 2/2.</text>
</comment>
<comment type="pathway">
    <text evidence="1">Nucleotide-sugar biosynthesis; UDP-N-acetyl-alpha-D-glucosamine biosynthesis; UDP-N-acetyl-alpha-D-glucosamine from N-acetyl-alpha-D-glucosamine 1-phosphate: step 1/1.</text>
</comment>
<comment type="pathway">
    <text evidence="1">Bacterial outer membrane biogenesis; LPS lipid A biosynthesis.</text>
</comment>
<comment type="subunit">
    <text evidence="1">Homotrimer.</text>
</comment>
<comment type="subcellular location">
    <subcellularLocation>
        <location evidence="1">Cytoplasm</location>
    </subcellularLocation>
</comment>
<comment type="similarity">
    <text evidence="1">In the N-terminal section; belongs to the N-acetylglucosamine-1-phosphate uridyltransferase family.</text>
</comment>
<comment type="similarity">
    <text evidence="1">In the C-terminal section; belongs to the transferase hexapeptide repeat family.</text>
</comment>
<protein>
    <recommendedName>
        <fullName evidence="1">Bifunctional protein GlmU</fullName>
    </recommendedName>
    <domain>
        <recommendedName>
            <fullName evidence="1">UDP-N-acetylglucosamine pyrophosphorylase</fullName>
            <ecNumber evidence="1">2.7.7.23</ecNumber>
        </recommendedName>
        <alternativeName>
            <fullName evidence="1">N-acetylglucosamine-1-phosphate uridyltransferase</fullName>
        </alternativeName>
    </domain>
    <domain>
        <recommendedName>
            <fullName evidence="1">Glucosamine-1-phosphate N-acetyltransferase</fullName>
            <ecNumber evidence="1">2.3.1.157</ecNumber>
        </recommendedName>
    </domain>
</protein>
<accession>Q8DYE6</accession>
<sequence>MSNYAIILAAGKGTRMKSDLPKVMHKVSGITMLEHVFRSVQAIEPSKIVTVIGHKAELVRDVLGDKSEFVMQTEQLGTGHAVMMAEEELATSKGHTLVIAGDTPLITGESLKNLIDFHVNHKNVATILTADAANPFGYGRIIRNSDDEVTKIVEQKDANDFEQQVKEINTGTYVFDNQSLFEALKDINTNNAQGEYYLTDVIGIFKEAGKKVGAYKLRDFDESLGVNDRVALATAEKVMRHRIARQHMVNGVTVVNPDSAYIDIDVEIGEESVIEPNVTLKGQTKIGKGTLLTNGSYLVDAQVGNDVTITNSMVEESIISDGVTVGPYAHIRPGTSLAKGVHIGNFVEVKGSQIGENTKAGHLTYIGNAEVGCDVNFGAGTITVNYDGQNKFKTEIGSNVFIGSNSTLIAPLEIGDNALTAAGSTITDNVPIDSIAIGRGRQVNKEGYANKKPHHPSQK</sequence>
<proteinExistence type="inferred from homology"/>
<organism>
    <name type="scientific">Streptococcus agalactiae serotype V (strain ATCC BAA-611 / 2603 V/R)</name>
    <dbReference type="NCBI Taxonomy" id="208435"/>
    <lineage>
        <taxon>Bacteria</taxon>
        <taxon>Bacillati</taxon>
        <taxon>Bacillota</taxon>
        <taxon>Bacilli</taxon>
        <taxon>Lactobacillales</taxon>
        <taxon>Streptococcaceae</taxon>
        <taxon>Streptococcus</taxon>
    </lineage>
</organism>
<reference key="1">
    <citation type="journal article" date="2002" name="Proc. Natl. Acad. Sci. U.S.A.">
        <title>Complete genome sequence and comparative genomic analysis of an emerging human pathogen, serotype V Streptococcus agalactiae.</title>
        <authorList>
            <person name="Tettelin H."/>
            <person name="Masignani V."/>
            <person name="Cieslewicz M.J."/>
            <person name="Eisen J.A."/>
            <person name="Peterson S.N."/>
            <person name="Wessels M.R."/>
            <person name="Paulsen I.T."/>
            <person name="Nelson K.E."/>
            <person name="Margarit I."/>
            <person name="Read T.D."/>
            <person name="Madoff L.C."/>
            <person name="Wolf A.M."/>
            <person name="Beanan M.J."/>
            <person name="Brinkac L.M."/>
            <person name="Daugherty S.C."/>
            <person name="DeBoy R.T."/>
            <person name="Durkin A.S."/>
            <person name="Kolonay J.F."/>
            <person name="Madupu R."/>
            <person name="Lewis M.R."/>
            <person name="Radune D."/>
            <person name="Fedorova N.B."/>
            <person name="Scanlan D."/>
            <person name="Khouri H.M."/>
            <person name="Mulligan S."/>
            <person name="Carty H.A."/>
            <person name="Cline R.T."/>
            <person name="Van Aken S.E."/>
            <person name="Gill J."/>
            <person name="Scarselli M."/>
            <person name="Mora M."/>
            <person name="Iacobini E.T."/>
            <person name="Brettoni C."/>
            <person name="Galli G."/>
            <person name="Mariani M."/>
            <person name="Vegni F."/>
            <person name="Maione D."/>
            <person name="Rinaudo D."/>
            <person name="Rappuoli R."/>
            <person name="Telford J.L."/>
            <person name="Kasper D.L."/>
            <person name="Grandi G."/>
            <person name="Fraser C.M."/>
        </authorList>
    </citation>
    <scope>NUCLEOTIDE SEQUENCE [LARGE SCALE GENOMIC DNA]</scope>
    <source>
        <strain>ATCC BAA-611 / 2603 V/R</strain>
    </source>
</reference>
<dbReference type="EC" id="2.7.7.23" evidence="1"/>
<dbReference type="EC" id="2.3.1.157" evidence="1"/>
<dbReference type="EMBL" id="AE009948">
    <property type="protein sequence ID" value="AAN00405.1"/>
    <property type="molecule type" value="Genomic_DNA"/>
</dbReference>
<dbReference type="RefSeq" id="NP_688532.1">
    <property type="nucleotide sequence ID" value="NC_004116.1"/>
</dbReference>
<dbReference type="RefSeq" id="WP_000073770.1">
    <property type="nucleotide sequence ID" value="NC_004116.1"/>
</dbReference>
<dbReference type="SMR" id="Q8DYE6"/>
<dbReference type="STRING" id="208435.SAG1538"/>
<dbReference type="GeneID" id="66886392"/>
<dbReference type="KEGG" id="sag:SAG1538"/>
<dbReference type="PATRIC" id="fig|208435.3.peg.1547"/>
<dbReference type="HOGENOM" id="CLU_029499_15_2_9"/>
<dbReference type="OrthoDB" id="9775031at2"/>
<dbReference type="UniPathway" id="UPA00113">
    <property type="reaction ID" value="UER00532"/>
</dbReference>
<dbReference type="UniPathway" id="UPA00113">
    <property type="reaction ID" value="UER00533"/>
</dbReference>
<dbReference type="UniPathway" id="UPA00973"/>
<dbReference type="Proteomes" id="UP000000821">
    <property type="component" value="Chromosome"/>
</dbReference>
<dbReference type="GO" id="GO:0005737">
    <property type="term" value="C:cytoplasm"/>
    <property type="evidence" value="ECO:0007669"/>
    <property type="project" value="UniProtKB-SubCell"/>
</dbReference>
<dbReference type="GO" id="GO:0016020">
    <property type="term" value="C:membrane"/>
    <property type="evidence" value="ECO:0007669"/>
    <property type="project" value="GOC"/>
</dbReference>
<dbReference type="GO" id="GO:0019134">
    <property type="term" value="F:glucosamine-1-phosphate N-acetyltransferase activity"/>
    <property type="evidence" value="ECO:0007669"/>
    <property type="project" value="UniProtKB-UniRule"/>
</dbReference>
<dbReference type="GO" id="GO:0000287">
    <property type="term" value="F:magnesium ion binding"/>
    <property type="evidence" value="ECO:0007669"/>
    <property type="project" value="UniProtKB-UniRule"/>
</dbReference>
<dbReference type="GO" id="GO:0003977">
    <property type="term" value="F:UDP-N-acetylglucosamine diphosphorylase activity"/>
    <property type="evidence" value="ECO:0007669"/>
    <property type="project" value="UniProtKB-UniRule"/>
</dbReference>
<dbReference type="GO" id="GO:0000902">
    <property type="term" value="P:cell morphogenesis"/>
    <property type="evidence" value="ECO:0007669"/>
    <property type="project" value="UniProtKB-UniRule"/>
</dbReference>
<dbReference type="GO" id="GO:0071555">
    <property type="term" value="P:cell wall organization"/>
    <property type="evidence" value="ECO:0007669"/>
    <property type="project" value="UniProtKB-KW"/>
</dbReference>
<dbReference type="GO" id="GO:0009245">
    <property type="term" value="P:lipid A biosynthetic process"/>
    <property type="evidence" value="ECO:0007669"/>
    <property type="project" value="UniProtKB-UniRule"/>
</dbReference>
<dbReference type="GO" id="GO:0009252">
    <property type="term" value="P:peptidoglycan biosynthetic process"/>
    <property type="evidence" value="ECO:0007669"/>
    <property type="project" value="UniProtKB-UniRule"/>
</dbReference>
<dbReference type="GO" id="GO:0008360">
    <property type="term" value="P:regulation of cell shape"/>
    <property type="evidence" value="ECO:0007669"/>
    <property type="project" value="UniProtKB-KW"/>
</dbReference>
<dbReference type="GO" id="GO:0006048">
    <property type="term" value="P:UDP-N-acetylglucosamine biosynthetic process"/>
    <property type="evidence" value="ECO:0007669"/>
    <property type="project" value="UniProtKB-UniPathway"/>
</dbReference>
<dbReference type="CDD" id="cd02540">
    <property type="entry name" value="GT2_GlmU_N_bac"/>
    <property type="match status" value="1"/>
</dbReference>
<dbReference type="CDD" id="cd03353">
    <property type="entry name" value="LbH_GlmU_C"/>
    <property type="match status" value="1"/>
</dbReference>
<dbReference type="Gene3D" id="2.160.10.10">
    <property type="entry name" value="Hexapeptide repeat proteins"/>
    <property type="match status" value="1"/>
</dbReference>
<dbReference type="Gene3D" id="3.90.550.10">
    <property type="entry name" value="Spore Coat Polysaccharide Biosynthesis Protein SpsA, Chain A"/>
    <property type="match status" value="1"/>
</dbReference>
<dbReference type="HAMAP" id="MF_01631">
    <property type="entry name" value="GlmU"/>
    <property type="match status" value="1"/>
</dbReference>
<dbReference type="InterPro" id="IPR005882">
    <property type="entry name" value="Bifunctional_GlmU"/>
</dbReference>
<dbReference type="InterPro" id="IPR050065">
    <property type="entry name" value="GlmU-like"/>
</dbReference>
<dbReference type="InterPro" id="IPR038009">
    <property type="entry name" value="GlmU_C_LbH"/>
</dbReference>
<dbReference type="InterPro" id="IPR001451">
    <property type="entry name" value="Hexapep"/>
</dbReference>
<dbReference type="InterPro" id="IPR005835">
    <property type="entry name" value="NTP_transferase_dom"/>
</dbReference>
<dbReference type="InterPro" id="IPR029044">
    <property type="entry name" value="Nucleotide-diphossugar_trans"/>
</dbReference>
<dbReference type="InterPro" id="IPR011004">
    <property type="entry name" value="Trimer_LpxA-like_sf"/>
</dbReference>
<dbReference type="NCBIfam" id="TIGR01173">
    <property type="entry name" value="glmU"/>
    <property type="match status" value="1"/>
</dbReference>
<dbReference type="NCBIfam" id="NF010934">
    <property type="entry name" value="PRK14354.1"/>
    <property type="match status" value="1"/>
</dbReference>
<dbReference type="PANTHER" id="PTHR43584:SF3">
    <property type="entry name" value="BIFUNCTIONAL PROTEIN GLMU"/>
    <property type="match status" value="1"/>
</dbReference>
<dbReference type="PANTHER" id="PTHR43584">
    <property type="entry name" value="NUCLEOTIDYL TRANSFERASE"/>
    <property type="match status" value="1"/>
</dbReference>
<dbReference type="Pfam" id="PF00132">
    <property type="entry name" value="Hexapep"/>
    <property type="match status" value="2"/>
</dbReference>
<dbReference type="Pfam" id="PF00483">
    <property type="entry name" value="NTP_transferase"/>
    <property type="match status" value="1"/>
</dbReference>
<dbReference type="SUPFAM" id="SSF53448">
    <property type="entry name" value="Nucleotide-diphospho-sugar transferases"/>
    <property type="match status" value="1"/>
</dbReference>
<dbReference type="SUPFAM" id="SSF51161">
    <property type="entry name" value="Trimeric LpxA-like enzymes"/>
    <property type="match status" value="1"/>
</dbReference>
<evidence type="ECO:0000255" key="1">
    <source>
        <dbReference type="HAMAP-Rule" id="MF_01631"/>
    </source>
</evidence>
<name>GLMU_STRA5</name>
<feature type="chain" id="PRO_0000233847" description="Bifunctional protein GlmU">
    <location>
        <begin position="1"/>
        <end position="459"/>
    </location>
</feature>
<feature type="region of interest" description="Pyrophosphorylase" evidence="1">
    <location>
        <begin position="1"/>
        <end position="229"/>
    </location>
</feature>
<feature type="region of interest" description="Linker" evidence="1">
    <location>
        <begin position="230"/>
        <end position="250"/>
    </location>
</feature>
<feature type="region of interest" description="N-acetyltransferase" evidence="1">
    <location>
        <begin position="251"/>
        <end position="459"/>
    </location>
</feature>
<feature type="active site" description="Proton acceptor" evidence="1">
    <location>
        <position position="362"/>
    </location>
</feature>
<feature type="binding site" evidence="1">
    <location>
        <begin position="8"/>
        <end position="11"/>
    </location>
    <ligand>
        <name>UDP-N-acetyl-alpha-D-glucosamine</name>
        <dbReference type="ChEBI" id="CHEBI:57705"/>
    </ligand>
</feature>
<feature type="binding site" evidence="1">
    <location>
        <position position="22"/>
    </location>
    <ligand>
        <name>UDP-N-acetyl-alpha-D-glucosamine</name>
        <dbReference type="ChEBI" id="CHEBI:57705"/>
    </ligand>
</feature>
<feature type="binding site" evidence="1">
    <location>
        <position position="72"/>
    </location>
    <ligand>
        <name>UDP-N-acetyl-alpha-D-glucosamine</name>
        <dbReference type="ChEBI" id="CHEBI:57705"/>
    </ligand>
</feature>
<feature type="binding site" evidence="1">
    <location>
        <begin position="77"/>
        <end position="78"/>
    </location>
    <ligand>
        <name>UDP-N-acetyl-alpha-D-glucosamine</name>
        <dbReference type="ChEBI" id="CHEBI:57705"/>
    </ligand>
</feature>
<feature type="binding site" evidence="1">
    <location>
        <position position="102"/>
    </location>
    <ligand>
        <name>Mg(2+)</name>
        <dbReference type="ChEBI" id="CHEBI:18420"/>
    </ligand>
</feature>
<feature type="binding site" evidence="1">
    <location>
        <position position="139"/>
    </location>
    <ligand>
        <name>UDP-N-acetyl-alpha-D-glucosamine</name>
        <dbReference type="ChEBI" id="CHEBI:57705"/>
    </ligand>
</feature>
<feature type="binding site" evidence="1">
    <location>
        <position position="154"/>
    </location>
    <ligand>
        <name>UDP-N-acetyl-alpha-D-glucosamine</name>
        <dbReference type="ChEBI" id="CHEBI:57705"/>
    </ligand>
</feature>
<feature type="binding site" evidence="1">
    <location>
        <position position="169"/>
    </location>
    <ligand>
        <name>UDP-N-acetyl-alpha-D-glucosamine</name>
        <dbReference type="ChEBI" id="CHEBI:57705"/>
    </ligand>
</feature>
<feature type="binding site" evidence="1">
    <location>
        <position position="227"/>
    </location>
    <ligand>
        <name>Mg(2+)</name>
        <dbReference type="ChEBI" id="CHEBI:18420"/>
    </ligand>
</feature>
<feature type="binding site" evidence="1">
    <location>
        <position position="227"/>
    </location>
    <ligand>
        <name>UDP-N-acetyl-alpha-D-glucosamine</name>
        <dbReference type="ChEBI" id="CHEBI:57705"/>
    </ligand>
</feature>
<feature type="binding site" evidence="1">
    <location>
        <position position="332"/>
    </location>
    <ligand>
        <name>UDP-N-acetyl-alpha-D-glucosamine</name>
        <dbReference type="ChEBI" id="CHEBI:57705"/>
    </ligand>
</feature>
<feature type="binding site" evidence="1">
    <location>
        <position position="350"/>
    </location>
    <ligand>
        <name>UDP-N-acetyl-alpha-D-glucosamine</name>
        <dbReference type="ChEBI" id="CHEBI:57705"/>
    </ligand>
</feature>
<feature type="binding site" evidence="1">
    <location>
        <position position="365"/>
    </location>
    <ligand>
        <name>UDP-N-acetyl-alpha-D-glucosamine</name>
        <dbReference type="ChEBI" id="CHEBI:57705"/>
    </ligand>
</feature>
<feature type="binding site" evidence="1">
    <location>
        <position position="376"/>
    </location>
    <ligand>
        <name>UDP-N-acetyl-alpha-D-glucosamine</name>
        <dbReference type="ChEBI" id="CHEBI:57705"/>
    </ligand>
</feature>
<feature type="binding site" evidence="1">
    <location>
        <position position="379"/>
    </location>
    <ligand>
        <name>acetyl-CoA</name>
        <dbReference type="ChEBI" id="CHEBI:57288"/>
    </ligand>
</feature>
<feature type="binding site" evidence="1">
    <location>
        <begin position="385"/>
        <end position="386"/>
    </location>
    <ligand>
        <name>acetyl-CoA</name>
        <dbReference type="ChEBI" id="CHEBI:57288"/>
    </ligand>
</feature>
<feature type="binding site" evidence="1">
    <location>
        <position position="404"/>
    </location>
    <ligand>
        <name>acetyl-CoA</name>
        <dbReference type="ChEBI" id="CHEBI:57288"/>
    </ligand>
</feature>
<feature type="binding site" evidence="1">
    <location>
        <position position="422"/>
    </location>
    <ligand>
        <name>acetyl-CoA</name>
        <dbReference type="ChEBI" id="CHEBI:57288"/>
    </ligand>
</feature>
<feature type="binding site" evidence="1">
    <location>
        <position position="439"/>
    </location>
    <ligand>
        <name>acetyl-CoA</name>
        <dbReference type="ChEBI" id="CHEBI:57288"/>
    </ligand>
</feature>
<keyword id="KW-0012">Acyltransferase</keyword>
<keyword id="KW-0133">Cell shape</keyword>
<keyword id="KW-0961">Cell wall biogenesis/degradation</keyword>
<keyword id="KW-0963">Cytoplasm</keyword>
<keyword id="KW-0460">Magnesium</keyword>
<keyword id="KW-0479">Metal-binding</keyword>
<keyword id="KW-0511">Multifunctional enzyme</keyword>
<keyword id="KW-0548">Nucleotidyltransferase</keyword>
<keyword id="KW-0573">Peptidoglycan synthesis</keyword>
<keyword id="KW-1185">Reference proteome</keyword>
<keyword id="KW-0677">Repeat</keyword>
<keyword id="KW-0808">Transferase</keyword>